<feature type="initiator methionine" description="Removed" evidence="7">
    <location>
        <position position="1"/>
    </location>
</feature>
<feature type="chain" id="PRO_0000071060" description="DnaJ homolog subfamily C member 8">
    <location>
        <begin position="2"/>
        <end position="253"/>
    </location>
</feature>
<feature type="domain" description="J" evidence="1">
    <location>
        <begin position="57"/>
        <end position="124"/>
    </location>
</feature>
<feature type="region of interest" description="Disordered" evidence="2">
    <location>
        <begin position="181"/>
        <end position="253"/>
    </location>
</feature>
<feature type="region of interest" description="Essential for polyglutamine aggregation suppression" evidence="4">
    <location>
        <begin position="232"/>
        <end position="253"/>
    </location>
</feature>
<feature type="short sequence motif" description="Nuclear localization signal" evidence="6">
    <location>
        <begin position="189"/>
        <end position="192"/>
    </location>
</feature>
<feature type="short sequence motif" description="Nuclear localization signal" evidence="6">
    <location>
        <begin position="203"/>
        <end position="206"/>
    </location>
</feature>
<feature type="compositionally biased region" description="Basic and acidic residues" evidence="2">
    <location>
        <begin position="181"/>
        <end position="222"/>
    </location>
</feature>
<feature type="compositionally biased region" description="Basic residues" evidence="2">
    <location>
        <begin position="231"/>
        <end position="240"/>
    </location>
</feature>
<feature type="modified residue" description="N-acetylalanine" evidence="7">
    <location>
        <position position="2"/>
    </location>
</feature>
<feature type="modified residue" description="Phosphoserine" evidence="9">
    <location>
        <position position="35"/>
    </location>
</feature>
<feature type="modified residue" description="N6-acetyllysine" evidence="8">
    <location>
        <position position="146"/>
    </location>
</feature>
<feature type="modified residue" description="Phosphoserine" evidence="10">
    <location>
        <position position="222"/>
    </location>
</feature>
<feature type="sequence conflict" description="In Ref. 3; CAG33181." evidence="5" ref="3">
    <original>E</original>
    <variation>D</variation>
    <location>
        <position position="253"/>
    </location>
</feature>
<feature type="helix" evidence="11">
    <location>
        <begin position="181"/>
        <end position="214"/>
    </location>
</feature>
<feature type="helix" evidence="11">
    <location>
        <begin position="216"/>
        <end position="232"/>
    </location>
</feature>
<organism>
    <name type="scientific">Homo sapiens</name>
    <name type="common">Human</name>
    <dbReference type="NCBI Taxonomy" id="9606"/>
    <lineage>
        <taxon>Eukaryota</taxon>
        <taxon>Metazoa</taxon>
        <taxon>Chordata</taxon>
        <taxon>Craniata</taxon>
        <taxon>Vertebrata</taxon>
        <taxon>Euteleostomi</taxon>
        <taxon>Mammalia</taxon>
        <taxon>Eutheria</taxon>
        <taxon>Euarchontoglires</taxon>
        <taxon>Primates</taxon>
        <taxon>Haplorrhini</taxon>
        <taxon>Catarrhini</taxon>
        <taxon>Hominidae</taxon>
        <taxon>Homo</taxon>
    </lineage>
</organism>
<sequence length="253" mass="29842">MAASGESGTSGGGGSTEEAFMTFYSEVKQIEKRDSVLTSKNQIERLTRPGSSYFNLNPFEVLQIDPEVTDEEIKKRFRQLSILVHPDKNQDDADRAQKAFEAVDKAYKLLLDQEQKKRALDVIQAGKEYVEHTVKERKKQLKKEGKPTIVEEDDPELFKQAVYKQTMKLFAELEIKRKEREAKEMHERKRQREEEIEAQEKAKREREWQKNFEESRDGRVDSWRNFQANTKGKKEKKNRTFLRPPKVKMEQRE</sequence>
<dbReference type="EMBL" id="AF083190">
    <property type="protein sequence ID" value="AAC35352.1"/>
    <property type="status" value="ALT_INIT"/>
    <property type="molecule type" value="mRNA"/>
</dbReference>
<dbReference type="EMBL" id="CR456900">
    <property type="protein sequence ID" value="CAG33181.1"/>
    <property type="status" value="ALT_INIT"/>
    <property type="molecule type" value="mRNA"/>
</dbReference>
<dbReference type="EMBL" id="AK300797">
    <property type="protein sequence ID" value="BAG62456.1"/>
    <property type="molecule type" value="mRNA"/>
</dbReference>
<dbReference type="EMBL" id="AL353354">
    <property type="status" value="NOT_ANNOTATED_CDS"/>
    <property type="molecule type" value="Genomic_DNA"/>
</dbReference>
<dbReference type="EMBL" id="AL353622">
    <property type="status" value="NOT_ANNOTATED_CDS"/>
    <property type="molecule type" value="Genomic_DNA"/>
</dbReference>
<dbReference type="EMBL" id="CH471059">
    <property type="protein sequence ID" value="EAX07707.1"/>
    <property type="molecule type" value="Genomic_DNA"/>
</dbReference>
<dbReference type="EMBL" id="CH471059">
    <property type="protein sequence ID" value="EAX07710.1"/>
    <property type="molecule type" value="Genomic_DNA"/>
</dbReference>
<dbReference type="EMBL" id="BC033159">
    <property type="protein sequence ID" value="AAH33159.1"/>
    <property type="molecule type" value="mRNA"/>
</dbReference>
<dbReference type="EMBL" id="AF161433">
    <property type="protein sequence ID" value="AAF28993.1"/>
    <property type="molecule type" value="mRNA"/>
</dbReference>
<dbReference type="EMBL" id="AF161449">
    <property type="protein sequence ID" value="AAF29009.1"/>
    <property type="molecule type" value="mRNA"/>
</dbReference>
<dbReference type="CCDS" id="CCDS41292.1"/>
<dbReference type="RefSeq" id="NP_055095.2">
    <property type="nucleotide sequence ID" value="NM_014280.3"/>
</dbReference>
<dbReference type="PDB" id="7VPX">
    <property type="method" value="EM"/>
    <property type="resolution" value="3.00 A"/>
    <property type="chains" value="J=1-253"/>
</dbReference>
<dbReference type="PDBsum" id="7VPX"/>
<dbReference type="EMDB" id="EMD-32074"/>
<dbReference type="SMR" id="O75937"/>
<dbReference type="BioGRID" id="116501">
    <property type="interactions" value="248"/>
</dbReference>
<dbReference type="CORUM" id="O75937"/>
<dbReference type="FunCoup" id="O75937">
    <property type="interactions" value="4042"/>
</dbReference>
<dbReference type="IntAct" id="O75937">
    <property type="interactions" value="75"/>
</dbReference>
<dbReference type="MINT" id="O75937"/>
<dbReference type="STRING" id="9606.ENSP00000263697"/>
<dbReference type="GlyGen" id="O75937">
    <property type="glycosylation" value="1 site, 1 O-linked glycan (1 site)"/>
</dbReference>
<dbReference type="iPTMnet" id="O75937"/>
<dbReference type="PhosphoSitePlus" id="O75937"/>
<dbReference type="BioMuta" id="DNAJC8"/>
<dbReference type="jPOST" id="O75937"/>
<dbReference type="MassIVE" id="O75937"/>
<dbReference type="PaxDb" id="9606-ENSP00000263697"/>
<dbReference type="PeptideAtlas" id="O75937"/>
<dbReference type="ProteomicsDB" id="50302"/>
<dbReference type="Pumba" id="O75937"/>
<dbReference type="TopDownProteomics" id="O75937"/>
<dbReference type="Antibodypedia" id="30906">
    <property type="antibodies" value="90 antibodies from 22 providers"/>
</dbReference>
<dbReference type="DNASU" id="22826"/>
<dbReference type="Ensembl" id="ENST00000263697.6">
    <property type="protein sequence ID" value="ENSP00000263697.4"/>
    <property type="gene ID" value="ENSG00000126698.11"/>
</dbReference>
<dbReference type="GeneID" id="22826"/>
<dbReference type="KEGG" id="hsa:22826"/>
<dbReference type="MANE-Select" id="ENST00000263697.6">
    <property type="protein sequence ID" value="ENSP00000263697.4"/>
    <property type="RefSeq nucleotide sequence ID" value="NM_014280.3"/>
    <property type="RefSeq protein sequence ID" value="NP_055095.2"/>
</dbReference>
<dbReference type="UCSC" id="uc001bpn.4">
    <property type="organism name" value="human"/>
</dbReference>
<dbReference type="AGR" id="HGNC:15470"/>
<dbReference type="CTD" id="22826"/>
<dbReference type="DisGeNET" id="22826"/>
<dbReference type="GeneCards" id="DNAJC8"/>
<dbReference type="HGNC" id="HGNC:15470">
    <property type="gene designation" value="DNAJC8"/>
</dbReference>
<dbReference type="HPA" id="ENSG00000126698">
    <property type="expression patterns" value="Low tissue specificity"/>
</dbReference>
<dbReference type="neXtProt" id="NX_O75937"/>
<dbReference type="OpenTargets" id="ENSG00000126698"/>
<dbReference type="PharmGKB" id="PA27425"/>
<dbReference type="VEuPathDB" id="HostDB:ENSG00000126698"/>
<dbReference type="eggNOG" id="KOG1150">
    <property type="taxonomic scope" value="Eukaryota"/>
</dbReference>
<dbReference type="GeneTree" id="ENSGT00390000012569"/>
<dbReference type="HOGENOM" id="CLU_070940_2_0_1"/>
<dbReference type="InParanoid" id="O75937"/>
<dbReference type="OMA" id="EIVNKAW"/>
<dbReference type="OrthoDB" id="342454at2759"/>
<dbReference type="PAN-GO" id="O75937">
    <property type="GO annotations" value="1 GO annotation based on evolutionary models"/>
</dbReference>
<dbReference type="PhylomeDB" id="O75937"/>
<dbReference type="TreeFam" id="TF105167"/>
<dbReference type="PathwayCommons" id="O75937"/>
<dbReference type="Reactome" id="R-HSA-72163">
    <property type="pathway name" value="mRNA Splicing - Major Pathway"/>
</dbReference>
<dbReference type="SignaLink" id="O75937"/>
<dbReference type="BioGRID-ORCS" id="22826">
    <property type="hits" value="626 hits in 1155 CRISPR screens"/>
</dbReference>
<dbReference type="CD-CODE" id="91857CE7">
    <property type="entry name" value="Nucleolus"/>
</dbReference>
<dbReference type="CD-CODE" id="DEE660B4">
    <property type="entry name" value="Stress granule"/>
</dbReference>
<dbReference type="ChiTaRS" id="DNAJC8">
    <property type="organism name" value="human"/>
</dbReference>
<dbReference type="GenomeRNAi" id="22826"/>
<dbReference type="Pharos" id="O75937">
    <property type="development level" value="Tbio"/>
</dbReference>
<dbReference type="PRO" id="PR:O75937"/>
<dbReference type="Proteomes" id="UP000005640">
    <property type="component" value="Chromosome 1"/>
</dbReference>
<dbReference type="RNAct" id="O75937">
    <property type="molecule type" value="protein"/>
</dbReference>
<dbReference type="Bgee" id="ENSG00000126698">
    <property type="expression patterns" value="Expressed in ganglionic eminence and 103 other cell types or tissues"/>
</dbReference>
<dbReference type="ExpressionAtlas" id="O75937">
    <property type="expression patterns" value="baseline and differential"/>
</dbReference>
<dbReference type="GO" id="GO:0005829">
    <property type="term" value="C:cytosol"/>
    <property type="evidence" value="ECO:0000314"/>
    <property type="project" value="HPA"/>
</dbReference>
<dbReference type="GO" id="GO:0045171">
    <property type="term" value="C:intercellular bridge"/>
    <property type="evidence" value="ECO:0000314"/>
    <property type="project" value="HPA"/>
</dbReference>
<dbReference type="GO" id="GO:0005654">
    <property type="term" value="C:nucleoplasm"/>
    <property type="evidence" value="ECO:0000314"/>
    <property type="project" value="HPA"/>
</dbReference>
<dbReference type="GO" id="GO:0005634">
    <property type="term" value="C:nucleus"/>
    <property type="evidence" value="ECO:0000314"/>
    <property type="project" value="UniProtKB"/>
</dbReference>
<dbReference type="GO" id="GO:0030544">
    <property type="term" value="F:Hsp70 protein binding"/>
    <property type="evidence" value="ECO:0000353"/>
    <property type="project" value="UniProtKB"/>
</dbReference>
<dbReference type="CDD" id="cd06257">
    <property type="entry name" value="DnaJ"/>
    <property type="match status" value="1"/>
</dbReference>
<dbReference type="FunFam" id="1.10.287.110:FF:000026">
    <property type="entry name" value="dnaJ homolog subfamily C member 8"/>
    <property type="match status" value="1"/>
</dbReference>
<dbReference type="Gene3D" id="1.10.287.110">
    <property type="entry name" value="DnaJ domain"/>
    <property type="match status" value="1"/>
</dbReference>
<dbReference type="InterPro" id="IPR001623">
    <property type="entry name" value="DnaJ_domain"/>
</dbReference>
<dbReference type="InterPro" id="IPR042858">
    <property type="entry name" value="DNAJC8"/>
</dbReference>
<dbReference type="InterPro" id="IPR036869">
    <property type="entry name" value="J_dom_sf"/>
</dbReference>
<dbReference type="PANTHER" id="PTHR15606:SF7">
    <property type="entry name" value="DNAJ HOMOLOG SUBFAMILY C MEMBER 8"/>
    <property type="match status" value="1"/>
</dbReference>
<dbReference type="PANTHER" id="PTHR15606">
    <property type="entry name" value="DNAJ HOMOLOG SUBFAMILY C MEMBER 8/LIPOPOLYSACCHARIDE SPECIFIC RESPONSE-7-RELATED"/>
    <property type="match status" value="1"/>
</dbReference>
<dbReference type="Pfam" id="PF00226">
    <property type="entry name" value="DnaJ"/>
    <property type="match status" value="1"/>
</dbReference>
<dbReference type="PRINTS" id="PR00625">
    <property type="entry name" value="JDOMAIN"/>
</dbReference>
<dbReference type="SMART" id="SM00271">
    <property type="entry name" value="DnaJ"/>
    <property type="match status" value="1"/>
</dbReference>
<dbReference type="SUPFAM" id="SSF46565">
    <property type="entry name" value="Chaperone J-domain"/>
    <property type="match status" value="1"/>
</dbReference>
<dbReference type="PROSITE" id="PS50076">
    <property type="entry name" value="DNAJ_2"/>
    <property type="match status" value="1"/>
</dbReference>
<accession>O75937</accession>
<accession>B4DUU4</accession>
<accession>D3DPM0</accession>
<accession>Q6IBA4</accession>
<accession>Q8N4Z5</accession>
<accession>Q9P051</accession>
<accession>Q9P067</accession>
<name>DNJC8_HUMAN</name>
<comment type="function">
    <text evidence="4">Suppresses polyglutamine (polyQ) aggregation of ATXN3 in neuronal cells (PubMed:27133716).</text>
</comment>
<comment type="subunit">
    <text evidence="3 4">Interacts with SRPK1 (PubMed:19240134). Interacts with HSP70 (HSPA1A or HSPA1B) (PubMed:27133716).</text>
</comment>
<comment type="interaction">
    <interactant intactId="EBI-1045911">
        <id>O75937</id>
    </interactant>
    <interactant intactId="EBI-6623016">
        <id>P30556</id>
        <label>AGTR1</label>
    </interactant>
    <organismsDiffer>false</organismsDiffer>
    <experiments>2</experiments>
</comment>
<comment type="interaction">
    <interactant intactId="EBI-1045911">
        <id>O75937</id>
    </interactant>
    <interactant intactId="EBI-2462271">
        <id>Q15428</id>
        <label>SF3A2</label>
    </interactant>
    <organismsDiffer>false</organismsDiffer>
    <experiments>2</experiments>
</comment>
<comment type="subcellular location">
    <subcellularLocation>
        <location evidence="4">Nucleus</location>
    </subcellularLocation>
</comment>
<comment type="tissue specificity">
    <text evidence="4">Ubiquitous.</text>
</comment>
<comment type="sequence caution" evidence="5">
    <conflict type="erroneous initiation">
        <sequence resource="EMBL-CDS" id="AAC35352"/>
    </conflict>
    <text>Extended N-terminus.</text>
</comment>
<comment type="sequence caution" evidence="5">
    <conflict type="erroneous initiation">
        <sequence resource="EMBL-CDS" id="CAG33181"/>
    </conflict>
    <text>Extended N-terminus.</text>
</comment>
<keyword id="KW-0002">3D-structure</keyword>
<keyword id="KW-0007">Acetylation</keyword>
<keyword id="KW-0143">Chaperone</keyword>
<keyword id="KW-0539">Nucleus</keyword>
<keyword id="KW-0597">Phosphoprotein</keyword>
<keyword id="KW-1267">Proteomics identification</keyword>
<keyword id="KW-1185">Reference proteome</keyword>
<gene>
    <name type="primary">DNAJC8</name>
    <name type="synonym">SPF31</name>
    <name type="ORF">HSPC315</name>
    <name type="ORF">HSPC331</name>
</gene>
<proteinExistence type="evidence at protein level"/>
<evidence type="ECO:0000255" key="1">
    <source>
        <dbReference type="PROSITE-ProRule" id="PRU00286"/>
    </source>
</evidence>
<evidence type="ECO:0000256" key="2">
    <source>
        <dbReference type="SAM" id="MobiDB-lite"/>
    </source>
</evidence>
<evidence type="ECO:0000269" key="3">
    <source>
    </source>
</evidence>
<evidence type="ECO:0000269" key="4">
    <source>
    </source>
</evidence>
<evidence type="ECO:0000305" key="5"/>
<evidence type="ECO:0000305" key="6">
    <source>
    </source>
</evidence>
<evidence type="ECO:0007744" key="7">
    <source>
    </source>
</evidence>
<evidence type="ECO:0007744" key="8">
    <source>
    </source>
</evidence>
<evidence type="ECO:0007744" key="9">
    <source>
    </source>
</evidence>
<evidence type="ECO:0007744" key="10">
    <source>
    </source>
</evidence>
<evidence type="ECO:0007829" key="11">
    <source>
        <dbReference type="PDB" id="7VPX"/>
    </source>
</evidence>
<protein>
    <recommendedName>
        <fullName>DnaJ homolog subfamily C member 8</fullName>
    </recommendedName>
    <alternativeName>
        <fullName>Splicing protein spf31</fullName>
    </alternativeName>
</protein>
<reference key="1">
    <citation type="journal article" date="2016" name="Biochem. Biophys. Res. Commun.">
        <title>A novel nuclear DnaJ protein, DNAJC8, can suppress the formation of spinocerebellar ataxia 3 polyglutamine aggregation in a J-domain independent manner.</title>
        <authorList>
            <person name="Ito N."/>
            <person name="Kamiguchi K."/>
            <person name="Nakanishi K."/>
            <person name="Sokolovskya A."/>
            <person name="Hirohashi Y."/>
            <person name="Tamura Y."/>
            <person name="Murai A."/>
            <person name="Yamamoto E."/>
            <person name="Kanaseki T."/>
            <person name="Tsukahara T."/>
            <person name="Kochin V."/>
            <person name="Chiba S."/>
            <person name="Shimohama S."/>
            <person name="Sato N."/>
            <person name="Torigoe T."/>
        </authorList>
    </citation>
    <scope>NUCLEOTIDE SEQUENCE [MRNA]</scope>
    <scope>FUNCTION</scope>
    <scope>SUBCELLULAR LOCATION</scope>
    <scope>INTERACTION WITH HSP70</scope>
    <scope>TISSUE SPECIFICITY</scope>
</reference>
<reference key="2">
    <citation type="submission" date="1998-08" db="EMBL/GenBank/DDBJ databases">
        <title>spf31: a protein involved in splicing.</title>
        <authorList>
            <person name="King A."/>
            <person name="Ajuh P."/>
            <person name="Schrotz-King P."/>
            <person name="Lamond A."/>
            <person name="Mann M."/>
        </authorList>
    </citation>
    <scope>NUCLEOTIDE SEQUENCE [MRNA]</scope>
</reference>
<reference key="3">
    <citation type="submission" date="2004-06" db="EMBL/GenBank/DDBJ databases">
        <title>Cloning of human full open reading frames in Gateway(TM) system entry vector (pDONR201).</title>
        <authorList>
            <person name="Ebert L."/>
            <person name="Schick M."/>
            <person name="Neubert P."/>
            <person name="Schatten R."/>
            <person name="Henze S."/>
            <person name="Korn B."/>
        </authorList>
    </citation>
    <scope>NUCLEOTIDE SEQUENCE [LARGE SCALE MRNA]</scope>
</reference>
<reference key="4">
    <citation type="journal article" date="2004" name="Nat. Genet.">
        <title>Complete sequencing and characterization of 21,243 full-length human cDNAs.</title>
        <authorList>
            <person name="Ota T."/>
            <person name="Suzuki Y."/>
            <person name="Nishikawa T."/>
            <person name="Otsuki T."/>
            <person name="Sugiyama T."/>
            <person name="Irie R."/>
            <person name="Wakamatsu A."/>
            <person name="Hayashi K."/>
            <person name="Sato H."/>
            <person name="Nagai K."/>
            <person name="Kimura K."/>
            <person name="Makita H."/>
            <person name="Sekine M."/>
            <person name="Obayashi M."/>
            <person name="Nishi T."/>
            <person name="Shibahara T."/>
            <person name="Tanaka T."/>
            <person name="Ishii S."/>
            <person name="Yamamoto J."/>
            <person name="Saito K."/>
            <person name="Kawai Y."/>
            <person name="Isono Y."/>
            <person name="Nakamura Y."/>
            <person name="Nagahari K."/>
            <person name="Murakami K."/>
            <person name="Yasuda T."/>
            <person name="Iwayanagi T."/>
            <person name="Wagatsuma M."/>
            <person name="Shiratori A."/>
            <person name="Sudo H."/>
            <person name="Hosoiri T."/>
            <person name="Kaku Y."/>
            <person name="Kodaira H."/>
            <person name="Kondo H."/>
            <person name="Sugawara M."/>
            <person name="Takahashi M."/>
            <person name="Kanda K."/>
            <person name="Yokoi T."/>
            <person name="Furuya T."/>
            <person name="Kikkawa E."/>
            <person name="Omura Y."/>
            <person name="Abe K."/>
            <person name="Kamihara K."/>
            <person name="Katsuta N."/>
            <person name="Sato K."/>
            <person name="Tanikawa M."/>
            <person name="Yamazaki M."/>
            <person name="Ninomiya K."/>
            <person name="Ishibashi T."/>
            <person name="Yamashita H."/>
            <person name="Murakawa K."/>
            <person name="Fujimori K."/>
            <person name="Tanai H."/>
            <person name="Kimata M."/>
            <person name="Watanabe M."/>
            <person name="Hiraoka S."/>
            <person name="Chiba Y."/>
            <person name="Ishida S."/>
            <person name="Ono Y."/>
            <person name="Takiguchi S."/>
            <person name="Watanabe S."/>
            <person name="Yosida M."/>
            <person name="Hotuta T."/>
            <person name="Kusano J."/>
            <person name="Kanehori K."/>
            <person name="Takahashi-Fujii A."/>
            <person name="Hara H."/>
            <person name="Tanase T.-O."/>
            <person name="Nomura Y."/>
            <person name="Togiya S."/>
            <person name="Komai F."/>
            <person name="Hara R."/>
            <person name="Takeuchi K."/>
            <person name="Arita M."/>
            <person name="Imose N."/>
            <person name="Musashino K."/>
            <person name="Yuuki H."/>
            <person name="Oshima A."/>
            <person name="Sasaki N."/>
            <person name="Aotsuka S."/>
            <person name="Yoshikawa Y."/>
            <person name="Matsunawa H."/>
            <person name="Ichihara T."/>
            <person name="Shiohata N."/>
            <person name="Sano S."/>
            <person name="Moriya S."/>
            <person name="Momiyama H."/>
            <person name="Satoh N."/>
            <person name="Takami S."/>
            <person name="Terashima Y."/>
            <person name="Suzuki O."/>
            <person name="Nakagawa S."/>
            <person name="Senoh A."/>
            <person name="Mizoguchi H."/>
            <person name="Goto Y."/>
            <person name="Shimizu F."/>
            <person name="Wakebe H."/>
            <person name="Hishigaki H."/>
            <person name="Watanabe T."/>
            <person name="Sugiyama A."/>
            <person name="Takemoto M."/>
            <person name="Kawakami B."/>
            <person name="Yamazaki M."/>
            <person name="Watanabe K."/>
            <person name="Kumagai A."/>
            <person name="Itakura S."/>
            <person name="Fukuzumi Y."/>
            <person name="Fujimori Y."/>
            <person name="Komiyama M."/>
            <person name="Tashiro H."/>
            <person name="Tanigami A."/>
            <person name="Fujiwara T."/>
            <person name="Ono T."/>
            <person name="Yamada K."/>
            <person name="Fujii Y."/>
            <person name="Ozaki K."/>
            <person name="Hirao M."/>
            <person name="Ohmori Y."/>
            <person name="Kawabata A."/>
            <person name="Hikiji T."/>
            <person name="Kobatake N."/>
            <person name="Inagaki H."/>
            <person name="Ikema Y."/>
            <person name="Okamoto S."/>
            <person name="Okitani R."/>
            <person name="Kawakami T."/>
            <person name="Noguchi S."/>
            <person name="Itoh T."/>
            <person name="Shigeta K."/>
            <person name="Senba T."/>
            <person name="Matsumura K."/>
            <person name="Nakajima Y."/>
            <person name="Mizuno T."/>
            <person name="Morinaga M."/>
            <person name="Sasaki M."/>
            <person name="Togashi T."/>
            <person name="Oyama M."/>
            <person name="Hata H."/>
            <person name="Watanabe M."/>
            <person name="Komatsu T."/>
            <person name="Mizushima-Sugano J."/>
            <person name="Satoh T."/>
            <person name="Shirai Y."/>
            <person name="Takahashi Y."/>
            <person name="Nakagawa K."/>
            <person name="Okumura K."/>
            <person name="Nagase T."/>
            <person name="Nomura N."/>
            <person name="Kikuchi H."/>
            <person name="Masuho Y."/>
            <person name="Yamashita R."/>
            <person name="Nakai K."/>
            <person name="Yada T."/>
            <person name="Nakamura Y."/>
            <person name="Ohara O."/>
            <person name="Isogai T."/>
            <person name="Sugano S."/>
        </authorList>
    </citation>
    <scope>NUCLEOTIDE SEQUENCE [LARGE SCALE MRNA]</scope>
</reference>
<reference key="5">
    <citation type="journal article" date="2006" name="Nature">
        <title>The DNA sequence and biological annotation of human chromosome 1.</title>
        <authorList>
            <person name="Gregory S.G."/>
            <person name="Barlow K.F."/>
            <person name="McLay K.E."/>
            <person name="Kaul R."/>
            <person name="Swarbreck D."/>
            <person name="Dunham A."/>
            <person name="Scott C.E."/>
            <person name="Howe K.L."/>
            <person name="Woodfine K."/>
            <person name="Spencer C.C.A."/>
            <person name="Jones M.C."/>
            <person name="Gillson C."/>
            <person name="Searle S."/>
            <person name="Zhou Y."/>
            <person name="Kokocinski F."/>
            <person name="McDonald L."/>
            <person name="Evans R."/>
            <person name="Phillips K."/>
            <person name="Atkinson A."/>
            <person name="Cooper R."/>
            <person name="Jones C."/>
            <person name="Hall R.E."/>
            <person name="Andrews T.D."/>
            <person name="Lloyd C."/>
            <person name="Ainscough R."/>
            <person name="Almeida J.P."/>
            <person name="Ambrose K.D."/>
            <person name="Anderson F."/>
            <person name="Andrew R.W."/>
            <person name="Ashwell R.I.S."/>
            <person name="Aubin K."/>
            <person name="Babbage A.K."/>
            <person name="Bagguley C.L."/>
            <person name="Bailey J."/>
            <person name="Beasley H."/>
            <person name="Bethel G."/>
            <person name="Bird C.P."/>
            <person name="Bray-Allen S."/>
            <person name="Brown J.Y."/>
            <person name="Brown A.J."/>
            <person name="Buckley D."/>
            <person name="Burton J."/>
            <person name="Bye J."/>
            <person name="Carder C."/>
            <person name="Chapman J.C."/>
            <person name="Clark S.Y."/>
            <person name="Clarke G."/>
            <person name="Clee C."/>
            <person name="Cobley V."/>
            <person name="Collier R.E."/>
            <person name="Corby N."/>
            <person name="Coville G.J."/>
            <person name="Davies J."/>
            <person name="Deadman R."/>
            <person name="Dunn M."/>
            <person name="Earthrowl M."/>
            <person name="Ellington A.G."/>
            <person name="Errington H."/>
            <person name="Frankish A."/>
            <person name="Frankland J."/>
            <person name="French L."/>
            <person name="Garner P."/>
            <person name="Garnett J."/>
            <person name="Gay L."/>
            <person name="Ghori M.R.J."/>
            <person name="Gibson R."/>
            <person name="Gilby L.M."/>
            <person name="Gillett W."/>
            <person name="Glithero R.J."/>
            <person name="Grafham D.V."/>
            <person name="Griffiths C."/>
            <person name="Griffiths-Jones S."/>
            <person name="Grocock R."/>
            <person name="Hammond S."/>
            <person name="Harrison E.S.I."/>
            <person name="Hart E."/>
            <person name="Haugen E."/>
            <person name="Heath P.D."/>
            <person name="Holmes S."/>
            <person name="Holt K."/>
            <person name="Howden P.J."/>
            <person name="Hunt A.R."/>
            <person name="Hunt S.E."/>
            <person name="Hunter G."/>
            <person name="Isherwood J."/>
            <person name="James R."/>
            <person name="Johnson C."/>
            <person name="Johnson D."/>
            <person name="Joy A."/>
            <person name="Kay M."/>
            <person name="Kershaw J.K."/>
            <person name="Kibukawa M."/>
            <person name="Kimberley A.M."/>
            <person name="King A."/>
            <person name="Knights A.J."/>
            <person name="Lad H."/>
            <person name="Laird G."/>
            <person name="Lawlor S."/>
            <person name="Leongamornlert D.A."/>
            <person name="Lloyd D.M."/>
            <person name="Loveland J."/>
            <person name="Lovell J."/>
            <person name="Lush M.J."/>
            <person name="Lyne R."/>
            <person name="Martin S."/>
            <person name="Mashreghi-Mohammadi M."/>
            <person name="Matthews L."/>
            <person name="Matthews N.S.W."/>
            <person name="McLaren S."/>
            <person name="Milne S."/>
            <person name="Mistry S."/>
            <person name="Moore M.J.F."/>
            <person name="Nickerson T."/>
            <person name="O'Dell C.N."/>
            <person name="Oliver K."/>
            <person name="Palmeiri A."/>
            <person name="Palmer S.A."/>
            <person name="Parker A."/>
            <person name="Patel D."/>
            <person name="Pearce A.V."/>
            <person name="Peck A.I."/>
            <person name="Pelan S."/>
            <person name="Phelps K."/>
            <person name="Phillimore B.J."/>
            <person name="Plumb R."/>
            <person name="Rajan J."/>
            <person name="Raymond C."/>
            <person name="Rouse G."/>
            <person name="Saenphimmachak C."/>
            <person name="Sehra H.K."/>
            <person name="Sheridan E."/>
            <person name="Shownkeen R."/>
            <person name="Sims S."/>
            <person name="Skuce C.D."/>
            <person name="Smith M."/>
            <person name="Steward C."/>
            <person name="Subramanian S."/>
            <person name="Sycamore N."/>
            <person name="Tracey A."/>
            <person name="Tromans A."/>
            <person name="Van Helmond Z."/>
            <person name="Wall M."/>
            <person name="Wallis J.M."/>
            <person name="White S."/>
            <person name="Whitehead S.L."/>
            <person name="Wilkinson J.E."/>
            <person name="Willey D.L."/>
            <person name="Williams H."/>
            <person name="Wilming L."/>
            <person name="Wray P.W."/>
            <person name="Wu Z."/>
            <person name="Coulson A."/>
            <person name="Vaudin M."/>
            <person name="Sulston J.E."/>
            <person name="Durbin R.M."/>
            <person name="Hubbard T."/>
            <person name="Wooster R."/>
            <person name="Dunham I."/>
            <person name="Carter N.P."/>
            <person name="McVean G."/>
            <person name="Ross M.T."/>
            <person name="Harrow J."/>
            <person name="Olson M.V."/>
            <person name="Beck S."/>
            <person name="Rogers J."/>
            <person name="Bentley D.R."/>
        </authorList>
    </citation>
    <scope>NUCLEOTIDE SEQUENCE [LARGE SCALE GENOMIC DNA]</scope>
</reference>
<reference key="6">
    <citation type="submission" date="2005-09" db="EMBL/GenBank/DDBJ databases">
        <authorList>
            <person name="Mural R.J."/>
            <person name="Istrail S."/>
            <person name="Sutton G.G."/>
            <person name="Florea L."/>
            <person name="Halpern A.L."/>
            <person name="Mobarry C.M."/>
            <person name="Lippert R."/>
            <person name="Walenz B."/>
            <person name="Shatkay H."/>
            <person name="Dew I."/>
            <person name="Miller J.R."/>
            <person name="Flanigan M.J."/>
            <person name="Edwards N.J."/>
            <person name="Bolanos R."/>
            <person name="Fasulo D."/>
            <person name="Halldorsson B.V."/>
            <person name="Hannenhalli S."/>
            <person name="Turner R."/>
            <person name="Yooseph S."/>
            <person name="Lu F."/>
            <person name="Nusskern D.R."/>
            <person name="Shue B.C."/>
            <person name="Zheng X.H."/>
            <person name="Zhong F."/>
            <person name="Delcher A.L."/>
            <person name="Huson D.H."/>
            <person name="Kravitz S.A."/>
            <person name="Mouchard L."/>
            <person name="Reinert K."/>
            <person name="Remington K.A."/>
            <person name="Clark A.G."/>
            <person name="Waterman M.S."/>
            <person name="Eichler E.E."/>
            <person name="Adams M.D."/>
            <person name="Hunkapiller M.W."/>
            <person name="Myers E.W."/>
            <person name="Venter J.C."/>
        </authorList>
    </citation>
    <scope>NUCLEOTIDE SEQUENCE [LARGE SCALE GENOMIC DNA]</scope>
</reference>
<reference key="7">
    <citation type="journal article" date="2004" name="Genome Res.">
        <title>The status, quality, and expansion of the NIH full-length cDNA project: the Mammalian Gene Collection (MGC).</title>
        <authorList>
            <consortium name="The MGC Project Team"/>
        </authorList>
    </citation>
    <scope>NUCLEOTIDE SEQUENCE [LARGE SCALE MRNA]</scope>
    <source>
        <tissue>Uterus</tissue>
    </source>
</reference>
<reference key="8">
    <citation type="submission" date="1999-05" db="EMBL/GenBank/DDBJ databases">
        <title>Human partial CDS from CD34+ stem cells.</title>
        <authorList>
            <person name="Ye M."/>
            <person name="Zhang Q.-H."/>
            <person name="Zhou J."/>
            <person name="Shen Y."/>
            <person name="Wu X.-Y."/>
            <person name="Guan Z.Q."/>
            <person name="Wang L."/>
            <person name="Fan H.-Y."/>
            <person name="Mao Y.-F."/>
            <person name="Dai M."/>
            <person name="Huang Q.-H."/>
            <person name="Chen S.-J."/>
            <person name="Chen Z."/>
        </authorList>
    </citation>
    <scope>NUCLEOTIDE SEQUENCE [LARGE SCALE MRNA] OF 96-253</scope>
    <source>
        <tissue>Umbilical cord blood</tissue>
    </source>
</reference>
<reference key="9">
    <citation type="journal article" date="2009" name="Anal. Chem.">
        <title>Lys-N and trypsin cover complementary parts of the phosphoproteome in a refined SCX-based approach.</title>
        <authorList>
            <person name="Gauci S."/>
            <person name="Helbig A.O."/>
            <person name="Slijper M."/>
            <person name="Krijgsveld J."/>
            <person name="Heck A.J."/>
            <person name="Mohammed S."/>
        </authorList>
    </citation>
    <scope>ACETYLATION [LARGE SCALE ANALYSIS] AT ALA-2</scope>
    <scope>CLEAVAGE OF INITIATOR METHIONINE [LARGE SCALE ANALYSIS]</scope>
    <scope>IDENTIFICATION BY MASS SPECTROMETRY [LARGE SCALE ANALYSIS]</scope>
</reference>
<reference key="10">
    <citation type="journal article" date="2009" name="Genes Dev.">
        <title>Regulation of SR protein phosphorylation and alternative splicing by modulating kinetic interactions of SRPK1 with molecular chaperones.</title>
        <authorList>
            <person name="Zhong X.Y."/>
            <person name="Ding J.H."/>
            <person name="Adams J.A."/>
            <person name="Ghosh G."/>
            <person name="Fu X.D."/>
        </authorList>
    </citation>
    <scope>INTERACTION WITH SRPK1</scope>
</reference>
<reference key="11">
    <citation type="journal article" date="2009" name="Sci. Signal.">
        <title>Quantitative phosphoproteomic analysis of T cell receptor signaling reveals system-wide modulation of protein-protein interactions.</title>
        <authorList>
            <person name="Mayya V."/>
            <person name="Lundgren D.H."/>
            <person name="Hwang S.-I."/>
            <person name="Rezaul K."/>
            <person name="Wu L."/>
            <person name="Eng J.K."/>
            <person name="Rodionov V."/>
            <person name="Han D.K."/>
        </authorList>
    </citation>
    <scope>IDENTIFICATION BY MASS SPECTROMETRY [LARGE SCALE ANALYSIS]</scope>
    <source>
        <tissue>Leukemic T-cell</tissue>
    </source>
</reference>
<reference key="12">
    <citation type="journal article" date="2009" name="Science">
        <title>Lysine acetylation targets protein complexes and co-regulates major cellular functions.</title>
        <authorList>
            <person name="Choudhary C."/>
            <person name="Kumar C."/>
            <person name="Gnad F."/>
            <person name="Nielsen M.L."/>
            <person name="Rehman M."/>
            <person name="Walther T.C."/>
            <person name="Olsen J.V."/>
            <person name="Mann M."/>
        </authorList>
    </citation>
    <scope>ACETYLATION [LARGE SCALE ANALYSIS] AT LYS-146</scope>
    <scope>IDENTIFICATION BY MASS SPECTROMETRY [LARGE SCALE ANALYSIS]</scope>
</reference>
<reference key="13">
    <citation type="journal article" date="2010" name="Sci. Signal.">
        <title>Quantitative phosphoproteomics reveals widespread full phosphorylation site occupancy during mitosis.</title>
        <authorList>
            <person name="Olsen J.V."/>
            <person name="Vermeulen M."/>
            <person name="Santamaria A."/>
            <person name="Kumar C."/>
            <person name="Miller M.L."/>
            <person name="Jensen L.J."/>
            <person name="Gnad F."/>
            <person name="Cox J."/>
            <person name="Jensen T.S."/>
            <person name="Nigg E.A."/>
            <person name="Brunak S."/>
            <person name="Mann M."/>
        </authorList>
    </citation>
    <scope>PHOSPHORYLATION [LARGE SCALE ANALYSIS] AT SER-35</scope>
    <scope>IDENTIFICATION BY MASS SPECTROMETRY [LARGE SCALE ANALYSIS]</scope>
    <source>
        <tissue>Cervix carcinoma</tissue>
    </source>
</reference>
<reference key="14">
    <citation type="journal article" date="2011" name="BMC Syst. Biol.">
        <title>Initial characterization of the human central proteome.</title>
        <authorList>
            <person name="Burkard T.R."/>
            <person name="Planyavsky M."/>
            <person name="Kaupe I."/>
            <person name="Breitwieser F.P."/>
            <person name="Buerckstuemmer T."/>
            <person name="Bennett K.L."/>
            <person name="Superti-Furga G."/>
            <person name="Colinge J."/>
        </authorList>
    </citation>
    <scope>IDENTIFICATION BY MASS SPECTROMETRY [LARGE SCALE ANALYSIS]</scope>
</reference>
<reference key="15">
    <citation type="journal article" date="2013" name="J. Proteome Res.">
        <title>Toward a comprehensive characterization of a human cancer cell phosphoproteome.</title>
        <authorList>
            <person name="Zhou H."/>
            <person name="Di Palma S."/>
            <person name="Preisinger C."/>
            <person name="Peng M."/>
            <person name="Polat A.N."/>
            <person name="Heck A.J."/>
            <person name="Mohammed S."/>
        </authorList>
    </citation>
    <scope>PHOSPHORYLATION [LARGE SCALE ANALYSIS] AT SER-222</scope>
    <scope>IDENTIFICATION BY MASS SPECTROMETRY [LARGE SCALE ANALYSIS]</scope>
    <source>
        <tissue>Erythroleukemia</tissue>
    </source>
</reference>
<reference key="16">
    <citation type="journal article" date="2014" name="J. Proteomics">
        <title>An enzyme assisted RP-RPLC approach for in-depth analysis of human liver phosphoproteome.</title>
        <authorList>
            <person name="Bian Y."/>
            <person name="Song C."/>
            <person name="Cheng K."/>
            <person name="Dong M."/>
            <person name="Wang F."/>
            <person name="Huang J."/>
            <person name="Sun D."/>
            <person name="Wang L."/>
            <person name="Ye M."/>
            <person name="Zou H."/>
        </authorList>
    </citation>
    <scope>IDENTIFICATION BY MASS SPECTROMETRY [LARGE SCALE ANALYSIS]</scope>
    <source>
        <tissue>Liver</tissue>
    </source>
</reference>